<keyword id="KW-0067">ATP-binding</keyword>
<keyword id="KW-0319">Glycerol metabolism</keyword>
<keyword id="KW-0418">Kinase</keyword>
<keyword id="KW-0547">Nucleotide-binding</keyword>
<keyword id="KW-1185">Reference proteome</keyword>
<keyword id="KW-0808">Transferase</keyword>
<feature type="chain" id="PRO_1000020772" description="Glycerol kinase">
    <location>
        <begin position="1"/>
        <end position="495"/>
    </location>
</feature>
<feature type="binding site" evidence="1">
    <location>
        <position position="11"/>
    </location>
    <ligand>
        <name>ADP</name>
        <dbReference type="ChEBI" id="CHEBI:456216"/>
    </ligand>
</feature>
<feature type="binding site" evidence="1">
    <location>
        <position position="11"/>
    </location>
    <ligand>
        <name>ATP</name>
        <dbReference type="ChEBI" id="CHEBI:30616"/>
    </ligand>
</feature>
<feature type="binding site" evidence="1">
    <location>
        <position position="11"/>
    </location>
    <ligand>
        <name>sn-glycerol 3-phosphate</name>
        <dbReference type="ChEBI" id="CHEBI:57597"/>
    </ligand>
</feature>
<feature type="binding site" evidence="1">
    <location>
        <position position="12"/>
    </location>
    <ligand>
        <name>ATP</name>
        <dbReference type="ChEBI" id="CHEBI:30616"/>
    </ligand>
</feature>
<feature type="binding site" evidence="1">
    <location>
        <position position="13"/>
    </location>
    <ligand>
        <name>ATP</name>
        <dbReference type="ChEBI" id="CHEBI:30616"/>
    </ligand>
</feature>
<feature type="binding site" evidence="1">
    <location>
        <position position="15"/>
    </location>
    <ligand>
        <name>ADP</name>
        <dbReference type="ChEBI" id="CHEBI:456216"/>
    </ligand>
</feature>
<feature type="binding site" evidence="1">
    <location>
        <position position="81"/>
    </location>
    <ligand>
        <name>glycerol</name>
        <dbReference type="ChEBI" id="CHEBI:17754"/>
    </ligand>
</feature>
<feature type="binding site" evidence="1">
    <location>
        <position position="81"/>
    </location>
    <ligand>
        <name>sn-glycerol 3-phosphate</name>
        <dbReference type="ChEBI" id="CHEBI:57597"/>
    </ligand>
</feature>
<feature type="binding site" evidence="1">
    <location>
        <position position="82"/>
    </location>
    <ligand>
        <name>glycerol</name>
        <dbReference type="ChEBI" id="CHEBI:17754"/>
    </ligand>
</feature>
<feature type="binding site" evidence="1">
    <location>
        <position position="82"/>
    </location>
    <ligand>
        <name>sn-glycerol 3-phosphate</name>
        <dbReference type="ChEBI" id="CHEBI:57597"/>
    </ligand>
</feature>
<feature type="binding site" evidence="1">
    <location>
        <position position="133"/>
    </location>
    <ligand>
        <name>glycerol</name>
        <dbReference type="ChEBI" id="CHEBI:17754"/>
    </ligand>
</feature>
<feature type="binding site" evidence="1">
    <location>
        <position position="133"/>
    </location>
    <ligand>
        <name>sn-glycerol 3-phosphate</name>
        <dbReference type="ChEBI" id="CHEBI:57597"/>
    </ligand>
</feature>
<feature type="binding site" evidence="1">
    <location>
        <position position="242"/>
    </location>
    <ligand>
        <name>glycerol</name>
        <dbReference type="ChEBI" id="CHEBI:17754"/>
    </ligand>
</feature>
<feature type="binding site" evidence="1">
    <location>
        <position position="242"/>
    </location>
    <ligand>
        <name>sn-glycerol 3-phosphate</name>
        <dbReference type="ChEBI" id="CHEBI:57597"/>
    </ligand>
</feature>
<feature type="binding site" evidence="1">
    <location>
        <position position="243"/>
    </location>
    <ligand>
        <name>glycerol</name>
        <dbReference type="ChEBI" id="CHEBI:17754"/>
    </ligand>
</feature>
<feature type="binding site" evidence="1">
    <location>
        <position position="264"/>
    </location>
    <ligand>
        <name>ADP</name>
        <dbReference type="ChEBI" id="CHEBI:456216"/>
    </ligand>
</feature>
<feature type="binding site" evidence="1">
    <location>
        <position position="264"/>
    </location>
    <ligand>
        <name>ATP</name>
        <dbReference type="ChEBI" id="CHEBI:30616"/>
    </ligand>
</feature>
<feature type="binding site" evidence="1">
    <location>
        <position position="307"/>
    </location>
    <ligand>
        <name>ADP</name>
        <dbReference type="ChEBI" id="CHEBI:456216"/>
    </ligand>
</feature>
<feature type="binding site" evidence="1">
    <location>
        <position position="307"/>
    </location>
    <ligand>
        <name>ATP</name>
        <dbReference type="ChEBI" id="CHEBI:30616"/>
    </ligand>
</feature>
<feature type="binding site" evidence="1">
    <location>
        <position position="311"/>
    </location>
    <ligand>
        <name>ATP</name>
        <dbReference type="ChEBI" id="CHEBI:30616"/>
    </ligand>
</feature>
<feature type="binding site" evidence="1">
    <location>
        <position position="410"/>
    </location>
    <ligand>
        <name>ADP</name>
        <dbReference type="ChEBI" id="CHEBI:456216"/>
    </ligand>
</feature>
<feature type="binding site" evidence="1">
    <location>
        <position position="410"/>
    </location>
    <ligand>
        <name>ATP</name>
        <dbReference type="ChEBI" id="CHEBI:30616"/>
    </ligand>
</feature>
<sequence>MTHILAIDQGTTSSRAIIFDASMNITASAQEEFAQHYPDSGWVEHDPGDLWATTAGTCRAAIEKAGLKPEDIAAIGITNQRETVVVWDKTSGQPVYNAIVWQDRRTAAYCKTLRDEGHDKMITARTGLLADPYFSATKLKWILDNVEGARDRATRGELLFGTVDTFLIWKLTGGAAHVTDATNAARTSLYDIHKGRWSQTICALFDIPQQMLPEVKDCAADFGVTRSDLFGRPVPILGVAGDQQAATIGQACFEPGMLKSTYGTGCFALLNTGDTAVASSNRLLTTIAYQFDGKPTYALEGSIFVAGAVVQWLRDGLQTIRKASETQAMAERADPNQNVVLVPAFVGLGAPYWDAECRGAVFGLTRNSGPDEFARAALESVGYQTRDLLDAMTADWQGSDVRATLRVDGGMSASDWAMQFLSDIIDAPVDRPKVLETTALGAAWLAGQRAGLYPDQAGFAASWALEKTFAPQMDAALRDRKYAAWKRAVDATLRF</sequence>
<reference key="1">
    <citation type="journal article" date="2007" name="J. Bacteriol.">
        <title>The complete genome sequence of Roseobacter denitrificans reveals a mixotrophic rather than photosynthetic metabolism.</title>
        <authorList>
            <person name="Swingley W.D."/>
            <person name="Sadekar S."/>
            <person name="Mastrian S.D."/>
            <person name="Matthies H.J."/>
            <person name="Hao J."/>
            <person name="Ramos H."/>
            <person name="Acharya C.R."/>
            <person name="Conrad A.L."/>
            <person name="Taylor H.L."/>
            <person name="Dejesa L.C."/>
            <person name="Shah M.K."/>
            <person name="O'Huallachain M.E."/>
            <person name="Lince M.T."/>
            <person name="Blankenship R.E."/>
            <person name="Beatty J.T."/>
            <person name="Touchman J.W."/>
        </authorList>
    </citation>
    <scope>NUCLEOTIDE SEQUENCE [LARGE SCALE GENOMIC DNA]</scope>
    <source>
        <strain>ATCC 33942 / OCh 114</strain>
    </source>
</reference>
<gene>
    <name evidence="1" type="primary">glpK</name>
    <name type="ordered locus">RD1_2883</name>
</gene>
<accession>Q165D5</accession>
<organism>
    <name type="scientific">Roseobacter denitrificans (strain ATCC 33942 / OCh 114)</name>
    <name type="common">Erythrobacter sp. (strain OCh 114)</name>
    <name type="synonym">Roseobacter denitrificans</name>
    <dbReference type="NCBI Taxonomy" id="375451"/>
    <lineage>
        <taxon>Bacteria</taxon>
        <taxon>Pseudomonadati</taxon>
        <taxon>Pseudomonadota</taxon>
        <taxon>Alphaproteobacteria</taxon>
        <taxon>Rhodobacterales</taxon>
        <taxon>Roseobacteraceae</taxon>
        <taxon>Roseobacter</taxon>
    </lineage>
</organism>
<comment type="function">
    <text evidence="1">Key enzyme in the regulation of glycerol uptake and metabolism. Catalyzes the phosphorylation of glycerol to yield sn-glycerol 3-phosphate.</text>
</comment>
<comment type="catalytic activity">
    <reaction evidence="1">
        <text>glycerol + ATP = sn-glycerol 3-phosphate + ADP + H(+)</text>
        <dbReference type="Rhea" id="RHEA:21644"/>
        <dbReference type="ChEBI" id="CHEBI:15378"/>
        <dbReference type="ChEBI" id="CHEBI:17754"/>
        <dbReference type="ChEBI" id="CHEBI:30616"/>
        <dbReference type="ChEBI" id="CHEBI:57597"/>
        <dbReference type="ChEBI" id="CHEBI:456216"/>
        <dbReference type="EC" id="2.7.1.30"/>
    </reaction>
</comment>
<comment type="activity regulation">
    <text evidence="1">Inhibited by fructose 1,6-bisphosphate (FBP).</text>
</comment>
<comment type="pathway">
    <text evidence="1">Polyol metabolism; glycerol degradation via glycerol kinase pathway; sn-glycerol 3-phosphate from glycerol: step 1/1.</text>
</comment>
<comment type="similarity">
    <text evidence="1">Belongs to the FGGY kinase family.</text>
</comment>
<protein>
    <recommendedName>
        <fullName evidence="1">Glycerol kinase</fullName>
        <ecNumber evidence="1">2.7.1.30</ecNumber>
    </recommendedName>
    <alternativeName>
        <fullName evidence="1">ATP:glycerol 3-phosphotransferase</fullName>
    </alternativeName>
    <alternativeName>
        <fullName evidence="1">Glycerokinase</fullName>
        <shortName evidence="1">GK</shortName>
    </alternativeName>
</protein>
<evidence type="ECO:0000255" key="1">
    <source>
        <dbReference type="HAMAP-Rule" id="MF_00186"/>
    </source>
</evidence>
<proteinExistence type="inferred from homology"/>
<name>GLPK_ROSDO</name>
<dbReference type="EC" id="2.7.1.30" evidence="1"/>
<dbReference type="EMBL" id="CP000362">
    <property type="protein sequence ID" value="ABG32408.1"/>
    <property type="molecule type" value="Genomic_DNA"/>
</dbReference>
<dbReference type="RefSeq" id="WP_011569024.1">
    <property type="nucleotide sequence ID" value="NC_008209.1"/>
</dbReference>
<dbReference type="SMR" id="Q165D5"/>
<dbReference type="STRING" id="375451.RD1_2883"/>
<dbReference type="KEGG" id="rde:RD1_2883"/>
<dbReference type="eggNOG" id="COG0554">
    <property type="taxonomic scope" value="Bacteria"/>
</dbReference>
<dbReference type="HOGENOM" id="CLU_009281_2_3_5"/>
<dbReference type="OrthoDB" id="9805576at2"/>
<dbReference type="UniPathway" id="UPA00618">
    <property type="reaction ID" value="UER00672"/>
</dbReference>
<dbReference type="Proteomes" id="UP000007029">
    <property type="component" value="Chromosome"/>
</dbReference>
<dbReference type="GO" id="GO:0005829">
    <property type="term" value="C:cytosol"/>
    <property type="evidence" value="ECO:0007669"/>
    <property type="project" value="TreeGrafter"/>
</dbReference>
<dbReference type="GO" id="GO:0005524">
    <property type="term" value="F:ATP binding"/>
    <property type="evidence" value="ECO:0007669"/>
    <property type="project" value="UniProtKB-UniRule"/>
</dbReference>
<dbReference type="GO" id="GO:0004370">
    <property type="term" value="F:glycerol kinase activity"/>
    <property type="evidence" value="ECO:0000250"/>
    <property type="project" value="UniProtKB"/>
</dbReference>
<dbReference type="GO" id="GO:0019563">
    <property type="term" value="P:glycerol catabolic process"/>
    <property type="evidence" value="ECO:0007669"/>
    <property type="project" value="UniProtKB-UniRule"/>
</dbReference>
<dbReference type="GO" id="GO:0006071">
    <property type="term" value="P:glycerol metabolic process"/>
    <property type="evidence" value="ECO:0000250"/>
    <property type="project" value="UniProtKB"/>
</dbReference>
<dbReference type="GO" id="GO:0006072">
    <property type="term" value="P:glycerol-3-phosphate metabolic process"/>
    <property type="evidence" value="ECO:0007669"/>
    <property type="project" value="InterPro"/>
</dbReference>
<dbReference type="CDD" id="cd07786">
    <property type="entry name" value="FGGY_EcGK_like"/>
    <property type="match status" value="1"/>
</dbReference>
<dbReference type="FunFam" id="3.30.420.40:FF:000007">
    <property type="entry name" value="Glycerol kinase"/>
    <property type="match status" value="1"/>
</dbReference>
<dbReference type="FunFam" id="3.30.420.40:FF:000008">
    <property type="entry name" value="Glycerol kinase"/>
    <property type="match status" value="1"/>
</dbReference>
<dbReference type="Gene3D" id="3.30.420.40">
    <property type="match status" value="2"/>
</dbReference>
<dbReference type="HAMAP" id="MF_00186">
    <property type="entry name" value="Glycerol_kin"/>
    <property type="match status" value="1"/>
</dbReference>
<dbReference type="InterPro" id="IPR043129">
    <property type="entry name" value="ATPase_NBD"/>
</dbReference>
<dbReference type="InterPro" id="IPR000577">
    <property type="entry name" value="Carb_kinase_FGGY"/>
</dbReference>
<dbReference type="InterPro" id="IPR018483">
    <property type="entry name" value="Carb_kinase_FGGY_CS"/>
</dbReference>
<dbReference type="InterPro" id="IPR018485">
    <property type="entry name" value="FGGY_C"/>
</dbReference>
<dbReference type="InterPro" id="IPR018484">
    <property type="entry name" value="FGGY_N"/>
</dbReference>
<dbReference type="InterPro" id="IPR005999">
    <property type="entry name" value="Glycerol_kin"/>
</dbReference>
<dbReference type="NCBIfam" id="TIGR01311">
    <property type="entry name" value="glycerol_kin"/>
    <property type="match status" value="1"/>
</dbReference>
<dbReference type="NCBIfam" id="NF000756">
    <property type="entry name" value="PRK00047.1"/>
    <property type="match status" value="1"/>
</dbReference>
<dbReference type="PANTHER" id="PTHR10196:SF78">
    <property type="entry name" value="GLYCEROL KINASE"/>
    <property type="match status" value="1"/>
</dbReference>
<dbReference type="PANTHER" id="PTHR10196">
    <property type="entry name" value="SUGAR KINASE"/>
    <property type="match status" value="1"/>
</dbReference>
<dbReference type="Pfam" id="PF02782">
    <property type="entry name" value="FGGY_C"/>
    <property type="match status" value="1"/>
</dbReference>
<dbReference type="Pfam" id="PF00370">
    <property type="entry name" value="FGGY_N"/>
    <property type="match status" value="1"/>
</dbReference>
<dbReference type="PIRSF" id="PIRSF000538">
    <property type="entry name" value="GlpK"/>
    <property type="match status" value="1"/>
</dbReference>
<dbReference type="SUPFAM" id="SSF53067">
    <property type="entry name" value="Actin-like ATPase domain"/>
    <property type="match status" value="2"/>
</dbReference>
<dbReference type="PROSITE" id="PS00933">
    <property type="entry name" value="FGGY_KINASES_1"/>
    <property type="match status" value="1"/>
</dbReference>
<dbReference type="PROSITE" id="PS00445">
    <property type="entry name" value="FGGY_KINASES_2"/>
    <property type="match status" value="1"/>
</dbReference>